<name>COAA_SHEHH</name>
<proteinExistence type="inferred from homology"/>
<accession>B0TM27</accession>
<keyword id="KW-0067">ATP-binding</keyword>
<keyword id="KW-0173">Coenzyme A biosynthesis</keyword>
<keyword id="KW-0963">Cytoplasm</keyword>
<keyword id="KW-0418">Kinase</keyword>
<keyword id="KW-0547">Nucleotide-binding</keyword>
<keyword id="KW-0808">Transferase</keyword>
<dbReference type="EC" id="2.7.1.33" evidence="1"/>
<dbReference type="EMBL" id="CP000931">
    <property type="protein sequence ID" value="ABZ78689.1"/>
    <property type="molecule type" value="Genomic_DNA"/>
</dbReference>
<dbReference type="RefSeq" id="WP_012279193.1">
    <property type="nucleotide sequence ID" value="NC_010334.1"/>
</dbReference>
<dbReference type="SMR" id="B0TM27"/>
<dbReference type="STRING" id="458817.Shal_4149"/>
<dbReference type="KEGG" id="shl:Shal_4149"/>
<dbReference type="eggNOG" id="COG1072">
    <property type="taxonomic scope" value="Bacteria"/>
</dbReference>
<dbReference type="HOGENOM" id="CLU_053818_1_1_6"/>
<dbReference type="OrthoDB" id="1550976at2"/>
<dbReference type="UniPathway" id="UPA00241">
    <property type="reaction ID" value="UER00352"/>
</dbReference>
<dbReference type="Proteomes" id="UP000001317">
    <property type="component" value="Chromosome"/>
</dbReference>
<dbReference type="GO" id="GO:0005737">
    <property type="term" value="C:cytoplasm"/>
    <property type="evidence" value="ECO:0007669"/>
    <property type="project" value="UniProtKB-SubCell"/>
</dbReference>
<dbReference type="GO" id="GO:0005524">
    <property type="term" value="F:ATP binding"/>
    <property type="evidence" value="ECO:0007669"/>
    <property type="project" value="UniProtKB-UniRule"/>
</dbReference>
<dbReference type="GO" id="GO:0004594">
    <property type="term" value="F:pantothenate kinase activity"/>
    <property type="evidence" value="ECO:0007669"/>
    <property type="project" value="UniProtKB-UniRule"/>
</dbReference>
<dbReference type="GO" id="GO:0015937">
    <property type="term" value="P:coenzyme A biosynthetic process"/>
    <property type="evidence" value="ECO:0007669"/>
    <property type="project" value="UniProtKB-UniRule"/>
</dbReference>
<dbReference type="CDD" id="cd02025">
    <property type="entry name" value="PanK"/>
    <property type="match status" value="1"/>
</dbReference>
<dbReference type="FunFam" id="3.40.50.300:FF:000242">
    <property type="entry name" value="Pantothenate kinase"/>
    <property type="match status" value="1"/>
</dbReference>
<dbReference type="Gene3D" id="3.40.50.300">
    <property type="entry name" value="P-loop containing nucleotide triphosphate hydrolases"/>
    <property type="match status" value="1"/>
</dbReference>
<dbReference type="HAMAP" id="MF_00215">
    <property type="entry name" value="Pantothen_kinase_1"/>
    <property type="match status" value="1"/>
</dbReference>
<dbReference type="InterPro" id="IPR027417">
    <property type="entry name" value="P-loop_NTPase"/>
</dbReference>
<dbReference type="InterPro" id="IPR004566">
    <property type="entry name" value="PanK"/>
</dbReference>
<dbReference type="InterPro" id="IPR006083">
    <property type="entry name" value="PRK/URK"/>
</dbReference>
<dbReference type="NCBIfam" id="TIGR00554">
    <property type="entry name" value="panK_bact"/>
    <property type="match status" value="1"/>
</dbReference>
<dbReference type="PANTHER" id="PTHR10285">
    <property type="entry name" value="URIDINE KINASE"/>
    <property type="match status" value="1"/>
</dbReference>
<dbReference type="Pfam" id="PF00485">
    <property type="entry name" value="PRK"/>
    <property type="match status" value="1"/>
</dbReference>
<dbReference type="PIRSF" id="PIRSF000545">
    <property type="entry name" value="Pantothenate_kin"/>
    <property type="match status" value="1"/>
</dbReference>
<dbReference type="SUPFAM" id="SSF52540">
    <property type="entry name" value="P-loop containing nucleoside triphosphate hydrolases"/>
    <property type="match status" value="1"/>
</dbReference>
<sequence length="316" mass="35774">MSQPNQIHNALYLAFQRLQWAGLRESVPLTLSENDLADLRGINEKISLSEVTDIYLPLSRLLNLNVGAKQQRGLALNEFLGHVPPKRPYIISIAGSVAVGKSTTARILQALLSHWPEHPKVDLITTDGFLYPLAELKRRGLLQRKGFPESYDMKALVEFISAIKAGEATVSSPIYSHITYDRIPDEQQWIRQPDILIIEGLNVLQTGQDSPVDTQRPFVSDFVDFSIYVDANESLLKKWYIDRFLQFRTGAFSSENSYFHHYSKLGDKEATATASNIWDTINGPNLTLNILPTRERAHLILQKGPDHLMDQVLLRK</sequence>
<gene>
    <name evidence="1" type="primary">coaA</name>
    <name type="ordered locus">Shal_4149</name>
</gene>
<evidence type="ECO:0000255" key="1">
    <source>
        <dbReference type="HAMAP-Rule" id="MF_00215"/>
    </source>
</evidence>
<organism>
    <name type="scientific">Shewanella halifaxensis (strain HAW-EB4)</name>
    <dbReference type="NCBI Taxonomy" id="458817"/>
    <lineage>
        <taxon>Bacteria</taxon>
        <taxon>Pseudomonadati</taxon>
        <taxon>Pseudomonadota</taxon>
        <taxon>Gammaproteobacteria</taxon>
        <taxon>Alteromonadales</taxon>
        <taxon>Shewanellaceae</taxon>
        <taxon>Shewanella</taxon>
    </lineage>
</organism>
<feature type="chain" id="PRO_1000078061" description="Pantothenate kinase">
    <location>
        <begin position="1"/>
        <end position="316"/>
    </location>
</feature>
<feature type="binding site" evidence="1">
    <location>
        <begin position="95"/>
        <end position="102"/>
    </location>
    <ligand>
        <name>ATP</name>
        <dbReference type="ChEBI" id="CHEBI:30616"/>
    </ligand>
</feature>
<reference key="1">
    <citation type="submission" date="2008-01" db="EMBL/GenBank/DDBJ databases">
        <title>Complete sequence of Shewanella halifaxensis HAW-EB4.</title>
        <authorList>
            <consortium name="US DOE Joint Genome Institute"/>
            <person name="Copeland A."/>
            <person name="Lucas S."/>
            <person name="Lapidus A."/>
            <person name="Glavina del Rio T."/>
            <person name="Dalin E."/>
            <person name="Tice H."/>
            <person name="Bruce D."/>
            <person name="Goodwin L."/>
            <person name="Pitluck S."/>
            <person name="Sims D."/>
            <person name="Brettin T."/>
            <person name="Detter J.C."/>
            <person name="Han C."/>
            <person name="Kuske C.R."/>
            <person name="Schmutz J."/>
            <person name="Larimer F."/>
            <person name="Land M."/>
            <person name="Hauser L."/>
            <person name="Kyrpides N."/>
            <person name="Kim E."/>
            <person name="Zhao J.-S."/>
            <person name="Richardson P."/>
        </authorList>
    </citation>
    <scope>NUCLEOTIDE SEQUENCE [LARGE SCALE GENOMIC DNA]</scope>
    <source>
        <strain>HAW-EB4</strain>
    </source>
</reference>
<protein>
    <recommendedName>
        <fullName evidence="1">Pantothenate kinase</fullName>
        <ecNumber evidence="1">2.7.1.33</ecNumber>
    </recommendedName>
    <alternativeName>
        <fullName evidence="1">Pantothenic acid kinase</fullName>
    </alternativeName>
</protein>
<comment type="catalytic activity">
    <reaction evidence="1">
        <text>(R)-pantothenate + ATP = (R)-4'-phosphopantothenate + ADP + H(+)</text>
        <dbReference type="Rhea" id="RHEA:16373"/>
        <dbReference type="ChEBI" id="CHEBI:10986"/>
        <dbReference type="ChEBI" id="CHEBI:15378"/>
        <dbReference type="ChEBI" id="CHEBI:29032"/>
        <dbReference type="ChEBI" id="CHEBI:30616"/>
        <dbReference type="ChEBI" id="CHEBI:456216"/>
        <dbReference type="EC" id="2.7.1.33"/>
    </reaction>
</comment>
<comment type="pathway">
    <text evidence="1">Cofactor biosynthesis; coenzyme A biosynthesis; CoA from (R)-pantothenate: step 1/5.</text>
</comment>
<comment type="subcellular location">
    <subcellularLocation>
        <location evidence="1">Cytoplasm</location>
    </subcellularLocation>
</comment>
<comment type="similarity">
    <text evidence="1">Belongs to the prokaryotic pantothenate kinase family.</text>
</comment>